<name>CHD8_HUMAN</name>
<feature type="chain" id="PRO_0000080233" description="Chromodomain-helicase-DNA-binding protein 8">
    <location>
        <begin position="1"/>
        <end position="2581"/>
    </location>
</feature>
<feature type="domain" description="Chromo 1" evidence="3">
    <location>
        <begin position="642"/>
        <end position="709"/>
    </location>
</feature>
<feature type="domain" description="Chromo 2" evidence="3">
    <location>
        <begin position="724"/>
        <end position="790"/>
    </location>
</feature>
<feature type="domain" description="Helicase ATP-binding" evidence="3">
    <location>
        <begin position="823"/>
        <end position="997"/>
    </location>
</feature>
<feature type="domain" description="Helicase C-terminal" evidence="3">
    <location>
        <begin position="1137"/>
        <end position="1288"/>
    </location>
</feature>
<feature type="region of interest" description="Disordered" evidence="4">
    <location>
        <begin position="22"/>
        <end position="114"/>
    </location>
</feature>
<feature type="region of interest" description="Disordered" evidence="4">
    <location>
        <begin position="253"/>
        <end position="283"/>
    </location>
</feature>
<feature type="region of interest" description="Disordered" evidence="4">
    <location>
        <begin position="349"/>
        <end position="392"/>
    </location>
</feature>
<feature type="region of interest" description="Disordered" evidence="4">
    <location>
        <begin position="429"/>
        <end position="582"/>
    </location>
</feature>
<feature type="region of interest" description="Disordered" evidence="4">
    <location>
        <begin position="596"/>
        <end position="615"/>
    </location>
</feature>
<feature type="region of interest" description="Disordered" evidence="4">
    <location>
        <begin position="1692"/>
        <end position="1712"/>
    </location>
</feature>
<feature type="region of interest" description="Interaction with FAM124B" evidence="3 11">
    <location>
        <begin position="1789"/>
        <end position="2302"/>
    </location>
</feature>
<feature type="region of interest" description="Disordered" evidence="4">
    <location>
        <begin position="1991"/>
        <end position="2116"/>
    </location>
</feature>
<feature type="region of interest" description="Disordered" evidence="4">
    <location>
        <begin position="2189"/>
        <end position="2229"/>
    </location>
</feature>
<feature type="region of interest" description="Disordered" evidence="4">
    <location>
        <begin position="2481"/>
        <end position="2581"/>
    </location>
</feature>
<feature type="short sequence motif" description="DEAH box" evidence="3">
    <location>
        <begin position="948"/>
        <end position="951"/>
    </location>
</feature>
<feature type="compositionally biased region" description="Polar residues" evidence="4">
    <location>
        <begin position="42"/>
        <end position="51"/>
    </location>
</feature>
<feature type="compositionally biased region" description="Polar residues" evidence="4">
    <location>
        <begin position="94"/>
        <end position="114"/>
    </location>
</feature>
<feature type="compositionally biased region" description="Low complexity" evidence="4">
    <location>
        <begin position="255"/>
        <end position="267"/>
    </location>
</feature>
<feature type="compositionally biased region" description="Pro residues" evidence="4">
    <location>
        <begin position="355"/>
        <end position="370"/>
    </location>
</feature>
<feature type="compositionally biased region" description="Basic and acidic residues" evidence="4">
    <location>
        <begin position="445"/>
        <end position="462"/>
    </location>
</feature>
<feature type="compositionally biased region" description="Basic and acidic residues" evidence="4">
    <location>
        <begin position="493"/>
        <end position="516"/>
    </location>
</feature>
<feature type="compositionally biased region" description="Basic residues" evidence="4">
    <location>
        <begin position="572"/>
        <end position="582"/>
    </location>
</feature>
<feature type="compositionally biased region" description="Polar residues" evidence="4">
    <location>
        <begin position="2011"/>
        <end position="2021"/>
    </location>
</feature>
<feature type="compositionally biased region" description="Acidic residues" evidence="4">
    <location>
        <begin position="2064"/>
        <end position="2073"/>
    </location>
</feature>
<feature type="compositionally biased region" description="Low complexity" evidence="4">
    <location>
        <begin position="2076"/>
        <end position="2095"/>
    </location>
</feature>
<feature type="compositionally biased region" description="Basic and acidic residues" evidence="4">
    <location>
        <begin position="2103"/>
        <end position="2116"/>
    </location>
</feature>
<feature type="compositionally biased region" description="Low complexity" evidence="4">
    <location>
        <begin position="2218"/>
        <end position="2229"/>
    </location>
</feature>
<feature type="compositionally biased region" description="Basic residues" evidence="4">
    <location>
        <begin position="2492"/>
        <end position="2510"/>
    </location>
</feature>
<feature type="compositionally biased region" description="Polar residues" evidence="4">
    <location>
        <begin position="2519"/>
        <end position="2528"/>
    </location>
</feature>
<feature type="compositionally biased region" description="Acidic residues" evidence="4">
    <location>
        <begin position="2536"/>
        <end position="2550"/>
    </location>
</feature>
<feature type="binding site" evidence="3">
    <location>
        <begin position="836"/>
        <end position="843"/>
    </location>
    <ligand>
        <name>ATP</name>
        <dbReference type="ChEBI" id="CHEBI:30616"/>
    </ligand>
</feature>
<feature type="modified residue" description="Phosphoserine" evidence="24">
    <location>
        <position position="432"/>
    </location>
</feature>
<feature type="modified residue" description="Phosphoserine" evidence="21">
    <location>
        <position position="553"/>
    </location>
</feature>
<feature type="modified residue" description="Phosphoserine" evidence="20">
    <location>
        <position position="562"/>
    </location>
</feature>
<feature type="modified residue" description="Phosphoserine" evidence="21 22 23">
    <location>
        <position position="1420"/>
    </location>
</feature>
<feature type="modified residue" description="Phosphoserine" evidence="21 22 23">
    <location>
        <position position="1424"/>
    </location>
</feature>
<feature type="modified residue" description="Phosphoserine" evidence="20">
    <location>
        <position position="1976"/>
    </location>
</feature>
<feature type="modified residue" description="Phosphoserine" evidence="24">
    <location>
        <position position="1978"/>
    </location>
</feature>
<feature type="modified residue" description="Phosphothreonine" evidence="21">
    <location>
        <position position="1993"/>
    </location>
</feature>
<feature type="modified residue" description="Phosphoserine" evidence="2">
    <location>
        <position position="1995"/>
    </location>
</feature>
<feature type="modified residue" description="Phosphoserine" evidence="20 21 22">
    <location>
        <position position="2008"/>
    </location>
</feature>
<feature type="modified residue" description="Phosphoserine" evidence="20 22 23 24">
    <location>
        <position position="2046"/>
    </location>
</feature>
<feature type="modified residue" description="Phosphothreonine" evidence="18">
    <location>
        <position position="2051"/>
    </location>
</feature>
<feature type="modified residue" description="Phosphoserine" evidence="23">
    <location>
        <position position="2069"/>
    </location>
</feature>
<feature type="modified residue" description="Phosphoserine" evidence="23">
    <location>
        <position position="2071"/>
    </location>
</feature>
<feature type="modified residue" description="Phosphoserine" evidence="19">
    <location>
        <position position="2182"/>
    </location>
</feature>
<feature type="modified residue" description="Phosphoserine" evidence="21">
    <location>
        <position position="2200"/>
    </location>
</feature>
<feature type="modified residue" description="Phosphoserine" evidence="1">
    <location>
        <position position="2202"/>
    </location>
</feature>
<feature type="modified residue" description="Phosphothreonine" evidence="1">
    <location>
        <position position="2204"/>
    </location>
</feature>
<feature type="modified residue" description="Phosphoserine" evidence="19">
    <location>
        <position position="2211"/>
    </location>
</feature>
<feature type="modified residue" description="Phosphothreonine" evidence="1">
    <location>
        <position position="2215"/>
    </location>
</feature>
<feature type="modified residue" description="Phosphoserine" evidence="2">
    <location>
        <position position="2223"/>
    </location>
</feature>
<feature type="modified residue" description="Phosphoserine" evidence="20 24">
    <location>
        <position position="2519"/>
    </location>
</feature>
<feature type="cross-link" description="Glycyl lysine isopeptide (Lys-Gly) (interchain with G-Cter in SUMO)" evidence="3">
    <location>
        <position position="609"/>
    </location>
</feature>
<feature type="cross-link" description="Glycyl lysine isopeptide (Lys-Gly) (interchain with G-Cter in SUMO2)" evidence="26">
    <location>
        <position position="2025"/>
    </location>
</feature>
<feature type="cross-link" description="Glycyl lysine isopeptide (Lys-Gly) (interchain with G-Cter in SUMO2)" evidence="25">
    <location>
        <position position="2256"/>
    </location>
</feature>
<feature type="splice variant" id="VSP_017270" description="In isoform 2." evidence="16">
    <original>MADPIMDLFDDPNLFGLDSLTDDSFNQVTQDPIEEALGLPSSLDSLDQMNQDGGGGDVGNSSASELVPPPEETAPTELSKESTAPAPESITLHDYTTQPASQEQPAQPVLQTSTPTSGLLQVSKSQEILSQGNPFMGVSATAVSSSSAGGQPPQSAPKIVILKAPPSSSVTGAHVAQIQAQGITSTAQPLVAGTANGGKVTFTKVLTGTPLRPGVSIVSGNTVLAAKVPGNQAAVQRIVQPSRPVKQLVLQPVKGSAPAGNPGATGPPLKPAVTLTSTPTQ</original>
    <variation>MK</variation>
    <location>
        <begin position="1"/>
        <end position="281"/>
    </location>
</feature>
<feature type="sequence variant" id="VAR_078704" description="In IDDAM; uncertain significance; dbSNP:rs996150988." evidence="12">
    <original>V</original>
    <variation>I</variation>
    <location>
        <position position="744"/>
    </location>
</feature>
<feature type="sequence variant" id="VAR_069573" description="In IDDAM." evidence="10">
    <location>
        <position position="2498"/>
    </location>
</feature>
<feature type="mutagenesis site" description="Abolishes ATPase activity." evidence="8">
    <original>K</original>
    <variation>R</variation>
    <location>
        <position position="842"/>
    </location>
</feature>
<feature type="sequence conflict" description="In Ref. 1; CAH18170." evidence="17" ref="1">
    <original>T</original>
    <variation>A</variation>
    <location>
        <position position="594"/>
    </location>
</feature>
<feature type="sequence conflict" description="In Ref. 1; CAH18170." evidence="17" ref="1">
    <original>D</original>
    <variation>N</variation>
    <location>
        <position position="1008"/>
    </location>
</feature>
<feature type="sequence conflict" description="In Ref. 1; CAH18170." evidence="17" ref="1">
    <original>P</original>
    <variation>Q</variation>
    <location>
        <position position="2481"/>
    </location>
</feature>
<feature type="sequence conflict" description="In Ref. 8; AAH36920." evidence="17" ref="8">
    <original>M</original>
    <variation>I</variation>
    <location>
        <position position="2568"/>
    </location>
</feature>
<feature type="strand" evidence="27">
    <location>
        <begin position="2311"/>
        <end position="2314"/>
    </location>
</feature>
<feature type="strand" evidence="27">
    <location>
        <begin position="2317"/>
        <end position="2319"/>
    </location>
</feature>
<feature type="turn" evidence="27">
    <location>
        <begin position="2320"/>
        <end position="2322"/>
    </location>
</feature>
<feature type="helix" evidence="28">
    <location>
        <begin position="2328"/>
        <end position="2330"/>
    </location>
</feature>
<feature type="helix" evidence="27">
    <location>
        <begin position="2334"/>
        <end position="2343"/>
    </location>
</feature>
<feature type="strand" evidence="27">
    <location>
        <begin position="2347"/>
        <end position="2349"/>
    </location>
</feature>
<feature type="helix" evidence="27">
    <location>
        <begin position="2351"/>
        <end position="2359"/>
    </location>
</feature>
<organism>
    <name type="scientific">Homo sapiens</name>
    <name type="common">Human</name>
    <dbReference type="NCBI Taxonomy" id="9606"/>
    <lineage>
        <taxon>Eukaryota</taxon>
        <taxon>Metazoa</taxon>
        <taxon>Chordata</taxon>
        <taxon>Craniata</taxon>
        <taxon>Vertebrata</taxon>
        <taxon>Euteleostomi</taxon>
        <taxon>Mammalia</taxon>
        <taxon>Eutheria</taxon>
        <taxon>Euarchontoglires</taxon>
        <taxon>Primates</taxon>
        <taxon>Haplorrhini</taxon>
        <taxon>Catarrhini</taxon>
        <taxon>Hominidae</taxon>
        <taxon>Homo</taxon>
    </lineage>
</organism>
<sequence>MADPIMDLFDDPNLFGLDSLTDDSFNQVTQDPIEEALGLPSSLDSLDQMNQDGGGGDVGNSSASELVPPPEETAPTELSKESTAPAPESITLHDYTTQPASQEQPAQPVLQTSTPTSGLLQVSKSQEILSQGNPFMGVSATAVSSSSAGGQPPQSAPKIVILKAPPSSSVTGAHVAQIQAQGITSTAQPLVAGTANGGKVTFTKVLTGTPLRPGVSIVSGNTVLAAKVPGNQAAVQRIVQPSRPVKQLVLQPVKGSAPAGNPGATGPPLKPAVTLTSTPTQGESKRITLVLQQPQSGGPQGHRHVVLGSLPGKIVLQGNQLAALTQAKNAQGQPAKVVTIQLQVQQPQQKIQIVPQPPSSQPQPQQPPSTQPVTLSSVQQAQIMGPGQSPGQRLSVPVKVVLQPQAGSSQGASSGLSVVKVLSASEVAALSSPASSAPHSGGKTGMEENRRLEHQKKQEKANRIVAEAIARARARGEQNIPRVLNEDELPSVRPEEEGEKKRRKKSAGERLKEEKPKKSKTSGASKTKGKSKLNTITPVVGKKRKRNTSSDNSDVEVMPAQSPREDEESSIQKRRSNRQVKRKKYTEDLDIKITDDEEEEEVDVTGPIKPEPILPEPVQEPDGETLPSMQFFVENPSEEDAAIVDKVLSMRIVKKELPSGQYTEAEEFFVKYKNYSYLHCEWATISQLEKDKRIHQKLKRFKTKMAQMRHFFHEDEEPFNPDYVEVDRILDESHSIDKDNGEPVIYYLVKWCSLPYEDSTWELKEDVDEGKIREFKRIQSRHPELKRVNRPQASAWKKLELSHEYKNRNQLREYQLEGVNWLLFNWYNRQNCILADEMGLGKTIQSIAFLQEVYNVGIHGPFLVIAPLSTITNWEREFNTWTEMNTIVYHGSLASRQMIQQYEMYCKDSRGRLIPGAYKFDALITTFEMILSDCPELREIEWRCVIIDEAHRLKNRNCKLLDSLKHMDLEHKVLLTGTPLQNTVEELFSLLHFLEPSQFPSESEFLKDFGDLKTEEQVQKLQAILKPMMLRRLKEDVEKNLAPKQETIIEVELTNIQKKYYRAILEKNFSFLSKGAGHTNMPNLLNTMMELRKCCNHPYLINGAEEKILTEFREACHIIPHDFHLQAMVRSAGKLVLIDKLLPKLKAGGHKVLIFSQMVRCLDILEDYLIQRRYLYERIDGRVRGNLRQAAIDRFSKPDSDRFVFLLCTRAGGLGINLTAADTCIIFDSDWNPQNDLQAQARCHRIGQSKAVKVYRLITRNSYEREMFDKASLKLGLDKAVLQSMSGRDGNITGIQQFSKKEIEDLLRKGAYAAIMEEDDEGSKFCEEDIDQILLRRTTTITIESEGKGSTFAKASFVASENRTDISLDDPNFWQKWAKKADLDMDLLNSKNNLVIDTPRVRKQTRHFSTLKDDDLVEFSDLESEDDERPRSRRHDRHHAYGRTDCFRVEKHLLVYGWGRWRDILSHGRFKRRMTERDVETICRAILVYCLLHYRGDENIKGFIWDLISPAENGKTKELQNHSGLSIPVPRGRKGKKVKSQSTFDIHKADWIRKYNPDTLFQDESYKKHLKHQCNKVLLRVRMLYYLRQEVIGDQAEKVLGGAIASEIDIWFPVVDQLEVPTTWWDSEADKSLLIGVFKHGYEKYNTMRADPALCFLEKAGRPDDKAIAAEHRVLDNFSDIVEGVDFDKDCEDPEYKPLQGPPKDQDDEGDPLMMMDEEISVIDGDEAQVTQQPGHLFWPPGSALTARLRRLVTAYQRSYKREQMKIEAAERGDRRRRRCEAAFKLKEIARREKQQRWTRREQTDFYRVVSTFGVEYDPDTMQFHWDRFRTFARLDKKTDESLTKYFHGFVAMCRQVCRLPPAAGDEPPDPNLFIEPITEERASRTLYRIELLRRLREQVLCHPLLEDRLALCQPPGPELPKWWEPVRHDGELLRGAARHGVSQTDCNIMQDPDFSFLAARMNYMQNHQAGAPAPSLSRCSTPLLHQQYTSRTASPLPLRPDAPVEKSPEETATQVPSLESLTLKLEHEVVARSRPTPQDYEMRVSPSDTTPLVSRSVPPVKLEDEDDSDSELDLSKLSPSSSSSSSSSSSSSSTDESEDEKEEKLTDQSRSKLYDEESLLSLTMSQDGFPNEDGEQMTPELLLLQERQRASEWPKDRVLINRIDLVCQAVLSGKWPSSRRSQEMVTGGILGPGNHLLDSPSLTPGEYGDSPVPTPRSSSAASMAEEEASAVSTAAAQFTKLRRGMDEKEFTVQIKDEEGLKLTFQKHKLMANGVMGDGHPLFHKKKGNRKKLVELEVECMEEPNHLDVDLETRIPVINKVDGTLLVGEDAPRRAELEMWLQGHPEFAVDPRFLAYMEDRRKQKWQRCKKNNKAELNCLGMEPVQTANSRNGKKGHHTETVFNRVLPGPIAPESSKKRARRMRPDLSKMMALMQGGSTGSLSLHNTFQHSSSGLQSVSSLGHSSATSASLPFMPFVMGGAPSSPHVDSSTMLHHHHHHPHPHHHHHHHPGLRAPGYPSSPVTTASGTTLRLPPLQPEEDDDEDEEDDDDLSQGYDSSERDFSLIDDPMMPANSDSSEDADD</sequence>
<gene>
    <name evidence="3" type="primary">CHD8</name>
    <name type="synonym">HELSNF1</name>
    <name type="synonym">KIAA1564</name>
</gene>
<comment type="function">
    <text evidence="3 7 8 13 15">ATP-dependent chromatin-remodeling factor, it slides nucleosomes along DNA; nucleosome sliding requires ATP (PubMed:28533432). Acts as a transcription repressor by remodeling chromatin structure and recruiting histone H1 to target genes. Suppresses p53/TP53-mediated apoptosis by recruiting histone H1 and preventing p53/TP53 transactivation activity. Acts as a negative regulator of Wnt signaling pathway by regulating beta-catenin (CTNNB1) activity. Negatively regulates CTNNB1-targeted gene expression by being recruited specifically to the promoter regions of several CTNNB1 responsive genes. Involved in both enhancer blocking and epigenetic remodeling at chromatin boundary via its interaction with CTCF. Acts as a suppressor of STAT3 activity by suppressing the LIF-induced STAT3 transcriptional activity. Also acts as a transcription activator via its interaction with ZNF143 by participating in efficient U6 RNA polymerase III transcription. Regulates alternative splicing of a core group of genes involved in neuronal differentiation, cell cycle and DNA repair. Enables H3K36me3-coupled transcription elongation and co-transcriptional RNA processing likely via interaction with HNRNPL.</text>
</comment>
<comment type="catalytic activity">
    <reaction evidence="3 8 13">
        <text>ATP + H2O = ADP + phosphate + H(+)</text>
        <dbReference type="Rhea" id="RHEA:13065"/>
        <dbReference type="ChEBI" id="CHEBI:15377"/>
        <dbReference type="ChEBI" id="CHEBI:15378"/>
        <dbReference type="ChEBI" id="CHEBI:30616"/>
        <dbReference type="ChEBI" id="CHEBI:43474"/>
        <dbReference type="ChEBI" id="CHEBI:456216"/>
    </reaction>
</comment>
<comment type="biophysicochemical properties">
    <kinetics>
        <KM evidence="13">55 nM for ATP</KM>
    </kinetics>
</comment>
<comment type="subunit">
    <text evidence="3 5 6 7 8 9 11 14 15">Interacts with p53/TP53, histone H1, CTNNB1, CTCF and PIAS3. Component of some MLL1/MLL complex, at least composed of the core components KMT2A/MLL1, ASH2L, HCFC1/HCF1, WDR5 and RBBP5, as well as the facultative components BACC1, CHD8, E2F6, HSP70, INO80C, KANSL1, LAS1L, MAX, MCRS1, MGA, KAT8/MOF, PELP1, PHF20, PRP31, RING2, RUVB1/TIP49A, RUVB2/TIP49B, SENP3, TAF1, TAF4, TAF6, TAF7, TAF9 and TEX10. Interacts with CHD7. Interacts with FAM124B (PubMed:23285124). Interacts with TLK2 (PubMed:33323470). Interacts with HNRNPL in an RNA-dependent manner.</text>
</comment>
<comment type="interaction">
    <interactant intactId="EBI-1169146">
        <id>Q9HCK8</id>
    </interactant>
    <interactant intactId="EBI-948905">
        <id>O00154</id>
        <label>ACOT7</label>
    </interactant>
    <organismsDiffer>false</organismsDiffer>
    <experiments>2</experiments>
</comment>
<comment type="interaction">
    <interactant intactId="EBI-1169146">
        <id>Q9HCK8</id>
    </interactant>
    <interactant intactId="EBI-540797">
        <id>Q9UBL3</id>
        <label>ASH2L</label>
    </interactant>
    <organismsDiffer>false</organismsDiffer>
    <experiments>2</experiments>
</comment>
<comment type="interaction">
    <interactant intactId="EBI-1169146">
        <id>Q9HCK8</id>
    </interactant>
    <interactant intactId="EBI-592823">
        <id>Q15291</id>
        <label>RBBP5</label>
    </interactant>
    <organismsDiffer>false</organismsDiffer>
    <experiments>2</experiments>
</comment>
<comment type="interaction">
    <interactant intactId="EBI-1169146">
        <id>Q9HCK8</id>
    </interactant>
    <interactant intactId="EBI-540834">
        <id>P61964</id>
        <label>WDR5</label>
    </interactant>
    <organismsDiffer>false</organismsDiffer>
    <experiments>3</experiments>
</comment>
<comment type="interaction">
    <interactant intactId="EBI-1169146">
        <id>Q9HCK8</id>
    </interactant>
    <interactant intactId="EBI-2795384">
        <id>O95365</id>
        <label>ZBTB7A</label>
    </interactant>
    <organismsDiffer>false</organismsDiffer>
    <experiments>2</experiments>
</comment>
<comment type="interaction">
    <interactant intactId="EBI-4410319">
        <id>Q9HCK8-2</id>
    </interactant>
    <interactant intactId="EBI-3951683">
        <id>Q9P2D1</id>
        <label>CHD7</label>
    </interactant>
    <organismsDiffer>false</organismsDiffer>
    <experiments>3</experiments>
</comment>
<comment type="interaction">
    <interactant intactId="EBI-4410319">
        <id>Q9HCK8-2</id>
    </interactant>
    <interactant intactId="EBI-30872379">
        <id>Q9H5Z6-1</id>
        <label>FAM124B</label>
    </interactant>
    <organismsDiffer>false</organismsDiffer>
    <experiments>3</experiments>
</comment>
<comment type="interaction">
    <interactant intactId="EBI-4410319">
        <id>Q9HCK8-2</id>
    </interactant>
    <interactant intactId="EBI-11986315">
        <id>Q9H5Z6-2</id>
        <label>FAM124B</label>
    </interactant>
    <organismsDiffer>false</organismsDiffer>
    <experiments>2</experiments>
</comment>
<comment type="subcellular location">
    <subcellularLocation>
        <location evidence="3 8 9 15">Nucleus</location>
    </subcellularLocation>
    <text evidence="3">Localizes to the promoter regions of several CTNNB1-responsive genes. Also present at known CTCF target sites.</text>
</comment>
<comment type="alternative products">
    <event type="alternative splicing"/>
    <isoform>
        <id>Q9HCK8-1</id>
        <name>1</name>
        <sequence type="displayed"/>
    </isoform>
    <isoform>
        <id>Q9HCK8-2</id>
        <name>2</name>
        <sequence type="described" ref="VSP_017270"/>
    </isoform>
</comment>
<comment type="PTM">
    <text evidence="3">Sumoylated.</text>
</comment>
<comment type="disease" evidence="10 12">
    <disease id="DI-03675">
        <name>Intellectual developmental disorder with autism and macrocephaly</name>
        <acronym>IDDAM</acronym>
        <description>An autosomal dominant disorder characterized by impaired intellectual development, a highly penetrant autism spectrum phenotype, and macrocephaly. Other common features include tall stature, gastrointestinal symptoms, distinct facial features, sleep problems, and attention problems.</description>
        <dbReference type="MIM" id="615032"/>
    </disease>
    <text>Disease susceptibility is associated with variants affecting the gene represented in this entry.</text>
</comment>
<comment type="miscellaneous">
    <text>Its gene is located in the 14q11.2 region of the genome which is associated with developmental delay, cognitive impairment and similar minor anomalies in some children, suggesting that it may be a good candidate for the phenotype.</text>
</comment>
<comment type="similarity">
    <text evidence="3">Belongs to the SNF2/RAD54 helicase family. CHD8 subfamily.</text>
</comment>
<accession>Q9HCK8</accession>
<accession>Q4G0D8</accession>
<accession>Q68DQ0</accession>
<accession>Q6DKH9</accession>
<accession>Q6P440</accession>
<accession>Q6ZNL7</accession>
<accession>Q8N3Z9</accession>
<accession>Q8NCY4</accession>
<accession>Q8TBR9</accession>
<accession>Q96F26</accession>
<evidence type="ECO:0000250" key="1">
    <source>
        <dbReference type="UniProtKB" id="Q09XV5"/>
    </source>
</evidence>
<evidence type="ECO:0000250" key="2">
    <source>
        <dbReference type="UniProtKB" id="Q9JIX5"/>
    </source>
</evidence>
<evidence type="ECO:0000255" key="3">
    <source>
        <dbReference type="HAMAP-Rule" id="MF_03071"/>
    </source>
</evidence>
<evidence type="ECO:0000256" key="4">
    <source>
        <dbReference type="SAM" id="MobiDB-lite"/>
    </source>
</evidence>
<evidence type="ECO:0000269" key="5">
    <source>
    </source>
</evidence>
<evidence type="ECO:0000269" key="6">
    <source>
    </source>
</evidence>
<evidence type="ECO:0000269" key="7">
    <source>
    </source>
</evidence>
<evidence type="ECO:0000269" key="8">
    <source>
    </source>
</evidence>
<evidence type="ECO:0000269" key="9">
    <source>
    </source>
</evidence>
<evidence type="ECO:0000269" key="10">
    <source>
    </source>
</evidence>
<evidence type="ECO:0000269" key="11">
    <source>
    </source>
</evidence>
<evidence type="ECO:0000269" key="12">
    <source>
    </source>
</evidence>
<evidence type="ECO:0000269" key="13">
    <source>
    </source>
</evidence>
<evidence type="ECO:0000269" key="14">
    <source>
    </source>
</evidence>
<evidence type="ECO:0000269" key="15">
    <source>
    </source>
</evidence>
<evidence type="ECO:0000303" key="16">
    <source>
    </source>
</evidence>
<evidence type="ECO:0000305" key="17"/>
<evidence type="ECO:0007744" key="18">
    <source>
    </source>
</evidence>
<evidence type="ECO:0007744" key="19">
    <source>
    </source>
</evidence>
<evidence type="ECO:0007744" key="20">
    <source>
    </source>
</evidence>
<evidence type="ECO:0007744" key="21">
    <source>
    </source>
</evidence>
<evidence type="ECO:0007744" key="22">
    <source>
    </source>
</evidence>
<evidence type="ECO:0007744" key="23">
    <source>
    </source>
</evidence>
<evidence type="ECO:0007744" key="24">
    <source>
    </source>
</evidence>
<evidence type="ECO:0007744" key="25">
    <source>
    </source>
</evidence>
<evidence type="ECO:0007744" key="26">
    <source>
    </source>
</evidence>
<evidence type="ECO:0007829" key="27">
    <source>
        <dbReference type="PDB" id="2CKA"/>
    </source>
</evidence>
<evidence type="ECO:0007829" key="28">
    <source>
        <dbReference type="PDB" id="2DL6"/>
    </source>
</evidence>
<dbReference type="EC" id="3.6.4.-" evidence="3 8 13"/>
<dbReference type="EMBL" id="CR749315">
    <property type="protein sequence ID" value="CAH18170.1"/>
    <property type="molecule type" value="mRNA"/>
</dbReference>
<dbReference type="EMBL" id="AL834524">
    <property type="protein sequence ID" value="CAD39180.1"/>
    <property type="molecule type" value="mRNA"/>
</dbReference>
<dbReference type="EMBL" id="AL135744">
    <property type="status" value="NOT_ANNOTATED_CDS"/>
    <property type="molecule type" value="Genomic_DNA"/>
</dbReference>
<dbReference type="EMBL" id="AL161747">
    <property type="status" value="NOT_ANNOTATED_CDS"/>
    <property type="molecule type" value="Genomic_DNA"/>
</dbReference>
<dbReference type="EMBL" id="CB043942">
    <property type="status" value="NOT_ANNOTATED_CDS"/>
    <property type="molecule type" value="mRNA"/>
</dbReference>
<dbReference type="EMBL" id="AB046784">
    <property type="protein sequence ID" value="BAB13390.3"/>
    <property type="molecule type" value="mRNA"/>
</dbReference>
<dbReference type="EMBL" id="AK131077">
    <property type="protein sequence ID" value="BAC85127.1"/>
    <property type="molecule type" value="mRNA"/>
</dbReference>
<dbReference type="EMBL" id="BC011695">
    <property type="protein sequence ID" value="AAH11695.2"/>
    <property type="molecule type" value="mRNA"/>
</dbReference>
<dbReference type="EMBL" id="BC025964">
    <property type="protein sequence ID" value="AAH25964.1"/>
    <property type="molecule type" value="mRNA"/>
</dbReference>
<dbReference type="EMBL" id="BC036920">
    <property type="protein sequence ID" value="AAH36920.1"/>
    <property type="molecule type" value="mRNA"/>
</dbReference>
<dbReference type="EMBL" id="BC063693">
    <property type="protein sequence ID" value="AAH63693.1"/>
    <property type="molecule type" value="mRNA"/>
</dbReference>
<dbReference type="EMBL" id="BC073903">
    <property type="protein sequence ID" value="AAH73903.1"/>
    <property type="molecule type" value="mRNA"/>
</dbReference>
<dbReference type="EMBL" id="BC098452">
    <property type="protein sequence ID" value="AAH98452.1"/>
    <property type="molecule type" value="mRNA"/>
</dbReference>
<dbReference type="CCDS" id="CCDS45081.1">
    <molecule id="Q9HCK8-2"/>
</dbReference>
<dbReference type="CCDS" id="CCDS53885.1">
    <molecule id="Q9HCK8-1"/>
</dbReference>
<dbReference type="RefSeq" id="NP_001164100.1">
    <molecule id="Q9HCK8-1"/>
    <property type="nucleotide sequence ID" value="NM_001170629.2"/>
</dbReference>
<dbReference type="RefSeq" id="NP_065971.2">
    <molecule id="Q9HCK8-2"/>
    <property type="nucleotide sequence ID" value="NM_020920.4"/>
</dbReference>
<dbReference type="PDB" id="2CKA">
    <property type="method" value="NMR"/>
    <property type="chains" value="A=2291-2364"/>
</dbReference>
<dbReference type="PDB" id="2DL6">
    <property type="method" value="NMR"/>
    <property type="chains" value="A=2303-2372"/>
</dbReference>
<dbReference type="PDBsum" id="2CKA"/>
<dbReference type="PDBsum" id="2DL6"/>
<dbReference type="SMR" id="Q9HCK8"/>
<dbReference type="BioGRID" id="121709">
    <property type="interactions" value="194"/>
</dbReference>
<dbReference type="CORUM" id="Q9HCK8"/>
<dbReference type="DIP" id="DIP-38021N"/>
<dbReference type="ELM" id="Q9HCK8"/>
<dbReference type="FunCoup" id="Q9HCK8">
    <property type="interactions" value="3617"/>
</dbReference>
<dbReference type="IntAct" id="Q9HCK8">
    <property type="interactions" value="203"/>
</dbReference>
<dbReference type="MINT" id="Q9HCK8"/>
<dbReference type="STRING" id="9606.ENSP00000495240"/>
<dbReference type="GlyCosmos" id="Q9HCK8">
    <property type="glycosylation" value="3 sites, 2 glycans"/>
</dbReference>
<dbReference type="GlyGen" id="Q9HCK8">
    <property type="glycosylation" value="13 sites, 1 N-linked glycan (1 site), 2 O-linked glycans (11 sites)"/>
</dbReference>
<dbReference type="iPTMnet" id="Q9HCK8"/>
<dbReference type="MetOSite" id="Q9HCK8"/>
<dbReference type="PhosphoSitePlus" id="Q9HCK8"/>
<dbReference type="BioMuta" id="CHD8"/>
<dbReference type="DMDM" id="317373586"/>
<dbReference type="jPOST" id="Q9HCK8"/>
<dbReference type="MassIVE" id="Q9HCK8"/>
<dbReference type="PaxDb" id="9606-ENSP00000382863"/>
<dbReference type="PeptideAtlas" id="Q9HCK8"/>
<dbReference type="ProteomicsDB" id="81748">
    <molecule id="Q9HCK8-1"/>
</dbReference>
<dbReference type="ProteomicsDB" id="81749">
    <molecule id="Q9HCK8-2"/>
</dbReference>
<dbReference type="Pumba" id="Q9HCK8"/>
<dbReference type="Antibodypedia" id="73">
    <property type="antibodies" value="127 antibodies from 21 providers"/>
</dbReference>
<dbReference type="DNASU" id="57680"/>
<dbReference type="Ensembl" id="ENST00000430710.8">
    <molecule id="Q9HCK8-2"/>
    <property type="protein sequence ID" value="ENSP00000406288.3"/>
    <property type="gene ID" value="ENSG00000100888.15"/>
</dbReference>
<dbReference type="Ensembl" id="ENST00000557364.6">
    <molecule id="Q9HCK8-1"/>
    <property type="protein sequence ID" value="ENSP00000451601.1"/>
    <property type="gene ID" value="ENSG00000100888.15"/>
</dbReference>
<dbReference type="Ensembl" id="ENST00000643469.1">
    <molecule id="Q9HCK8-1"/>
    <property type="protein sequence ID" value="ENSP00000495070.1"/>
    <property type="gene ID" value="ENSG00000100888.15"/>
</dbReference>
<dbReference type="Ensembl" id="ENST00000645929.1">
    <molecule id="Q9HCK8-2"/>
    <property type="protein sequence ID" value="ENSP00000494402.1"/>
    <property type="gene ID" value="ENSG00000100888.15"/>
</dbReference>
<dbReference type="Ensembl" id="ENST00000646647.2">
    <molecule id="Q9HCK8-1"/>
    <property type="protein sequence ID" value="ENSP00000495240.1"/>
    <property type="gene ID" value="ENSG00000100888.15"/>
</dbReference>
<dbReference type="GeneID" id="57680"/>
<dbReference type="KEGG" id="hsa:57680"/>
<dbReference type="MANE-Select" id="ENST00000646647.2">
    <property type="protein sequence ID" value="ENSP00000495240.1"/>
    <property type="RefSeq nucleotide sequence ID" value="NM_001170629.2"/>
    <property type="RefSeq protein sequence ID" value="NP_001164100.1"/>
</dbReference>
<dbReference type="UCSC" id="uc001war.3">
    <molecule id="Q9HCK8-1"/>
    <property type="organism name" value="human"/>
</dbReference>
<dbReference type="AGR" id="HGNC:20153"/>
<dbReference type="CTD" id="57680"/>
<dbReference type="DisGeNET" id="57680"/>
<dbReference type="GeneCards" id="CHD8"/>
<dbReference type="GeneReviews" id="CHD8"/>
<dbReference type="HGNC" id="HGNC:20153">
    <property type="gene designation" value="CHD8"/>
</dbReference>
<dbReference type="HPA" id="ENSG00000100888">
    <property type="expression patterns" value="Low tissue specificity"/>
</dbReference>
<dbReference type="MalaCards" id="CHD8"/>
<dbReference type="MIM" id="610528">
    <property type="type" value="gene"/>
</dbReference>
<dbReference type="MIM" id="615032">
    <property type="type" value="phenotype"/>
</dbReference>
<dbReference type="neXtProt" id="NX_Q9HCK8"/>
<dbReference type="OpenTargets" id="ENSG00000100888"/>
<dbReference type="Orphanet" id="261229">
    <property type="disease" value="14q11.2 microduplication syndrome"/>
</dbReference>
<dbReference type="Orphanet" id="642675">
    <property type="disease" value="CHD8 overgrowth syndrome"/>
</dbReference>
<dbReference type="PharmGKB" id="PA134957052"/>
<dbReference type="VEuPathDB" id="HostDB:ENSG00000100888"/>
<dbReference type="eggNOG" id="KOG0384">
    <property type="taxonomic scope" value="Eukaryota"/>
</dbReference>
<dbReference type="GeneTree" id="ENSGT00940000153649"/>
<dbReference type="HOGENOM" id="CLU_000315_5_2_1"/>
<dbReference type="InParanoid" id="Q9HCK8"/>
<dbReference type="OMA" id="AYMEDHR"/>
<dbReference type="OrthoDB" id="5857104at2759"/>
<dbReference type="PAN-GO" id="Q9HCK8">
    <property type="GO annotations" value="13 GO annotations based on evolutionary models"/>
</dbReference>
<dbReference type="PhylomeDB" id="Q9HCK8"/>
<dbReference type="TreeFam" id="TF313572"/>
<dbReference type="PathwayCommons" id="Q9HCK8"/>
<dbReference type="Reactome" id="R-HSA-3769402">
    <property type="pathway name" value="Deactivation of the beta-catenin transactivating complex"/>
</dbReference>
<dbReference type="SignaLink" id="Q9HCK8"/>
<dbReference type="SIGNOR" id="Q9HCK8"/>
<dbReference type="BioGRID-ORCS" id="57680">
    <property type="hits" value="152 hits in 1185 CRISPR screens"/>
</dbReference>
<dbReference type="ChiTaRS" id="CHD8">
    <property type="organism name" value="human"/>
</dbReference>
<dbReference type="EvolutionaryTrace" id="Q9HCK8"/>
<dbReference type="GeneWiki" id="CHD8"/>
<dbReference type="GenomeRNAi" id="57680"/>
<dbReference type="Pharos" id="Q9HCK8">
    <property type="development level" value="Tbio"/>
</dbReference>
<dbReference type="PRO" id="PR:Q9HCK8"/>
<dbReference type="Proteomes" id="UP000005640">
    <property type="component" value="Chromosome 14"/>
</dbReference>
<dbReference type="RNAct" id="Q9HCK8">
    <property type="molecule type" value="protein"/>
</dbReference>
<dbReference type="Bgee" id="ENSG00000100888">
    <property type="expression patterns" value="Expressed in sural nerve and 196 other cell types or tissues"/>
</dbReference>
<dbReference type="ExpressionAtlas" id="Q9HCK8">
    <property type="expression patterns" value="baseline and differential"/>
</dbReference>
<dbReference type="GO" id="GO:0000785">
    <property type="term" value="C:chromatin"/>
    <property type="evidence" value="ECO:0000318"/>
    <property type="project" value="GO_Central"/>
</dbReference>
<dbReference type="GO" id="GO:0071339">
    <property type="term" value="C:MLL1 complex"/>
    <property type="evidence" value="ECO:0000314"/>
    <property type="project" value="UniProtKB"/>
</dbReference>
<dbReference type="GO" id="GO:0005654">
    <property type="term" value="C:nucleoplasm"/>
    <property type="evidence" value="ECO:0000314"/>
    <property type="project" value="HPA"/>
</dbReference>
<dbReference type="GO" id="GO:0005634">
    <property type="term" value="C:nucleus"/>
    <property type="evidence" value="ECO:0000314"/>
    <property type="project" value="UniProtKB"/>
</dbReference>
<dbReference type="GO" id="GO:0032991">
    <property type="term" value="C:protein-containing complex"/>
    <property type="evidence" value="ECO:0000314"/>
    <property type="project" value="UniProtKB"/>
</dbReference>
<dbReference type="GO" id="GO:0005524">
    <property type="term" value="F:ATP binding"/>
    <property type="evidence" value="ECO:0000314"/>
    <property type="project" value="UniProtKB"/>
</dbReference>
<dbReference type="GO" id="GO:0016887">
    <property type="term" value="F:ATP hydrolysis activity"/>
    <property type="evidence" value="ECO:0000318"/>
    <property type="project" value="GO_Central"/>
</dbReference>
<dbReference type="GO" id="GO:0140658">
    <property type="term" value="F:ATP-dependent chromatin remodeler activity"/>
    <property type="evidence" value="ECO:0000314"/>
    <property type="project" value="GO_Central"/>
</dbReference>
<dbReference type="GO" id="GO:0008013">
    <property type="term" value="F:beta-catenin binding"/>
    <property type="evidence" value="ECO:0000314"/>
    <property type="project" value="UniProtKB"/>
</dbReference>
<dbReference type="GO" id="GO:0003682">
    <property type="term" value="F:chromatin binding"/>
    <property type="evidence" value="ECO:0000314"/>
    <property type="project" value="MGI"/>
</dbReference>
<dbReference type="GO" id="GO:0003677">
    <property type="term" value="F:DNA binding"/>
    <property type="evidence" value="ECO:0000315"/>
    <property type="project" value="UniProtKB"/>
</dbReference>
<dbReference type="GO" id="GO:0003678">
    <property type="term" value="F:DNA helicase activity"/>
    <property type="evidence" value="ECO:0007669"/>
    <property type="project" value="UniProtKB-UniRule"/>
</dbReference>
<dbReference type="GO" id="GO:0042393">
    <property type="term" value="F:histone binding"/>
    <property type="evidence" value="ECO:0000250"/>
    <property type="project" value="UniProtKB"/>
</dbReference>
<dbReference type="GO" id="GO:0140002">
    <property type="term" value="F:histone H3K4me3 reader activity"/>
    <property type="evidence" value="ECO:0000314"/>
    <property type="project" value="UniProtKB"/>
</dbReference>
<dbReference type="GO" id="GO:0002039">
    <property type="term" value="F:p53 binding"/>
    <property type="evidence" value="ECO:0000250"/>
    <property type="project" value="UniProtKB"/>
</dbReference>
<dbReference type="GO" id="GO:0007420">
    <property type="term" value="P:brain development"/>
    <property type="evidence" value="ECO:0000315"/>
    <property type="project" value="GO_Central"/>
</dbReference>
<dbReference type="GO" id="GO:0006338">
    <property type="term" value="P:chromatin remodeling"/>
    <property type="evidence" value="ECO:0000315"/>
    <property type="project" value="GO_Central"/>
</dbReference>
<dbReference type="GO" id="GO:0048565">
    <property type="term" value="P:digestive tract development"/>
    <property type="evidence" value="ECO:0000315"/>
    <property type="project" value="GO_Central"/>
</dbReference>
<dbReference type="GO" id="GO:0001701">
    <property type="term" value="P:in utero embryonic development"/>
    <property type="evidence" value="ECO:0007669"/>
    <property type="project" value="Ensembl"/>
</dbReference>
<dbReference type="GO" id="GO:0006397">
    <property type="term" value="P:mRNA processing"/>
    <property type="evidence" value="ECO:0000315"/>
    <property type="project" value="UniProtKB"/>
</dbReference>
<dbReference type="GO" id="GO:0090090">
    <property type="term" value="P:negative regulation of canonical Wnt signaling pathway"/>
    <property type="evidence" value="ECO:0000314"/>
    <property type="project" value="UniProtKB"/>
</dbReference>
<dbReference type="GO" id="GO:0045892">
    <property type="term" value="P:negative regulation of DNA-templated transcription"/>
    <property type="evidence" value="ECO:0000315"/>
    <property type="project" value="UniProtKB"/>
</dbReference>
<dbReference type="GO" id="GO:2000270">
    <property type="term" value="P:negative regulation of fibroblast apoptotic process"/>
    <property type="evidence" value="ECO:0007669"/>
    <property type="project" value="Ensembl"/>
</dbReference>
<dbReference type="GO" id="GO:0000122">
    <property type="term" value="P:negative regulation of transcription by RNA polymerase II"/>
    <property type="evidence" value="ECO:0000315"/>
    <property type="project" value="GO_Central"/>
</dbReference>
<dbReference type="GO" id="GO:0045893">
    <property type="term" value="P:positive regulation of DNA-templated transcription"/>
    <property type="evidence" value="ECO:0000314"/>
    <property type="project" value="UniProtKB"/>
</dbReference>
<dbReference type="GO" id="GO:0045944">
    <property type="term" value="P:positive regulation of transcription by RNA polymerase II"/>
    <property type="evidence" value="ECO:0000315"/>
    <property type="project" value="UniProtKB"/>
</dbReference>
<dbReference type="GO" id="GO:0045945">
    <property type="term" value="P:positive regulation of transcription by RNA polymerase III"/>
    <property type="evidence" value="ECO:0000315"/>
    <property type="project" value="UniProtKB"/>
</dbReference>
<dbReference type="GO" id="GO:0060134">
    <property type="term" value="P:prepulse inhibition"/>
    <property type="evidence" value="ECO:0007669"/>
    <property type="project" value="Ensembl"/>
</dbReference>
<dbReference type="GO" id="GO:0035176">
    <property type="term" value="P:social behavior"/>
    <property type="evidence" value="ECO:0007669"/>
    <property type="project" value="Ensembl"/>
</dbReference>
<dbReference type="GO" id="GO:0016055">
    <property type="term" value="P:Wnt signaling pathway"/>
    <property type="evidence" value="ECO:0007669"/>
    <property type="project" value="UniProtKB-KW"/>
</dbReference>
<dbReference type="CDD" id="cd18668">
    <property type="entry name" value="CD1_tandem_CHD5-9_like"/>
    <property type="match status" value="1"/>
</dbReference>
<dbReference type="CDD" id="cd18663">
    <property type="entry name" value="CD2_tandem_CHD5-9_like"/>
    <property type="match status" value="1"/>
</dbReference>
<dbReference type="CDD" id="cd18060">
    <property type="entry name" value="DEXHc_CHD8"/>
    <property type="match status" value="1"/>
</dbReference>
<dbReference type="CDD" id="cd18793">
    <property type="entry name" value="SF2_C_SNF"/>
    <property type="match status" value="1"/>
</dbReference>
<dbReference type="FunFam" id="3.40.5.120:FF:000004">
    <property type="entry name" value="Chromodomain-helicase-DNA-binding protein 8"/>
    <property type="match status" value="1"/>
</dbReference>
<dbReference type="FunFam" id="2.40.50.40:FF:000001">
    <property type="entry name" value="chromodomain-helicase-DNA-binding protein 8 isoform X4"/>
    <property type="match status" value="1"/>
</dbReference>
<dbReference type="FunFam" id="2.40.50.40:FF:000005">
    <property type="entry name" value="chromodomain-helicase-DNA-binding protein 8 isoform X4"/>
    <property type="match status" value="1"/>
</dbReference>
<dbReference type="FunFam" id="3.40.50.10810:FF:000003">
    <property type="entry name" value="chromodomain-helicase-DNA-binding protein 8 isoform X4"/>
    <property type="match status" value="1"/>
</dbReference>
<dbReference type="FunFam" id="3.40.50.300:FF:000015">
    <property type="entry name" value="chromodomain-helicase-DNA-binding protein 9 isoform X1"/>
    <property type="match status" value="1"/>
</dbReference>
<dbReference type="Gene3D" id="2.40.50.40">
    <property type="match status" value="2"/>
</dbReference>
<dbReference type="Gene3D" id="3.40.5.120">
    <property type="match status" value="1"/>
</dbReference>
<dbReference type="Gene3D" id="1.10.10.60">
    <property type="entry name" value="Homeodomain-like"/>
    <property type="match status" value="1"/>
</dbReference>
<dbReference type="Gene3D" id="3.40.50.300">
    <property type="entry name" value="P-loop containing nucleotide triphosphate hydrolases"/>
    <property type="match status" value="1"/>
</dbReference>
<dbReference type="Gene3D" id="3.40.50.10810">
    <property type="entry name" value="Tandem AAA-ATPase domain"/>
    <property type="match status" value="1"/>
</dbReference>
<dbReference type="HAMAP" id="MF_03071">
    <property type="entry name" value="CHD8"/>
    <property type="match status" value="1"/>
</dbReference>
<dbReference type="InterPro" id="IPR006576">
    <property type="entry name" value="BRK_domain"/>
</dbReference>
<dbReference type="InterPro" id="IPR037259">
    <property type="entry name" value="BRK_sf"/>
</dbReference>
<dbReference type="InterPro" id="IPR051493">
    <property type="entry name" value="CHD"/>
</dbReference>
<dbReference type="InterPro" id="IPR034724">
    <property type="entry name" value="CHD8"/>
</dbReference>
<dbReference type="InterPro" id="IPR016197">
    <property type="entry name" value="Chromo-like_dom_sf"/>
</dbReference>
<dbReference type="InterPro" id="IPR000953">
    <property type="entry name" value="Chromo/chromo_shadow_dom"/>
</dbReference>
<dbReference type="InterPro" id="IPR023780">
    <property type="entry name" value="Chromo_domain"/>
</dbReference>
<dbReference type="InterPro" id="IPR014001">
    <property type="entry name" value="Helicase_ATP-bd"/>
</dbReference>
<dbReference type="InterPro" id="IPR001650">
    <property type="entry name" value="Helicase_C-like"/>
</dbReference>
<dbReference type="InterPro" id="IPR056342">
    <property type="entry name" value="HTH_CHD6-9"/>
</dbReference>
<dbReference type="InterPro" id="IPR027417">
    <property type="entry name" value="P-loop_NTPase"/>
</dbReference>
<dbReference type="InterPro" id="IPR038718">
    <property type="entry name" value="SNF2-like_sf"/>
</dbReference>
<dbReference type="InterPro" id="IPR049730">
    <property type="entry name" value="SNF2/RAD54-like_C"/>
</dbReference>
<dbReference type="InterPro" id="IPR000330">
    <property type="entry name" value="SNF2_N"/>
</dbReference>
<dbReference type="PANTHER" id="PTHR46850">
    <property type="entry name" value="CHROMODOMAIN-HELICASE-DNA-BINDING PROTEIN 9"/>
    <property type="match status" value="1"/>
</dbReference>
<dbReference type="PANTHER" id="PTHR46850:SF1">
    <property type="entry name" value="CHROMODOMAIN-HELICASE-DNA-BINDING PROTEIN 9"/>
    <property type="match status" value="1"/>
</dbReference>
<dbReference type="Pfam" id="PF07533">
    <property type="entry name" value="BRK"/>
    <property type="match status" value="1"/>
</dbReference>
<dbReference type="Pfam" id="PF00385">
    <property type="entry name" value="Chromo"/>
    <property type="match status" value="2"/>
</dbReference>
<dbReference type="Pfam" id="PF00271">
    <property type="entry name" value="Helicase_C"/>
    <property type="match status" value="1"/>
</dbReference>
<dbReference type="Pfam" id="PF23078">
    <property type="entry name" value="HTH_CHD6-9"/>
    <property type="match status" value="1"/>
</dbReference>
<dbReference type="Pfam" id="PF00176">
    <property type="entry name" value="SNF2-rel_dom"/>
    <property type="match status" value="1"/>
</dbReference>
<dbReference type="SMART" id="SM00592">
    <property type="entry name" value="BRK"/>
    <property type="match status" value="2"/>
</dbReference>
<dbReference type="SMART" id="SM00298">
    <property type="entry name" value="CHROMO"/>
    <property type="match status" value="2"/>
</dbReference>
<dbReference type="SMART" id="SM00487">
    <property type="entry name" value="DEXDc"/>
    <property type="match status" value="1"/>
</dbReference>
<dbReference type="SMART" id="SM00490">
    <property type="entry name" value="HELICc"/>
    <property type="match status" value="1"/>
</dbReference>
<dbReference type="SUPFAM" id="SSF160481">
    <property type="entry name" value="BRK domain-like"/>
    <property type="match status" value="1"/>
</dbReference>
<dbReference type="SUPFAM" id="SSF54160">
    <property type="entry name" value="Chromo domain-like"/>
    <property type="match status" value="2"/>
</dbReference>
<dbReference type="SUPFAM" id="SSF52540">
    <property type="entry name" value="P-loop containing nucleoside triphosphate hydrolases"/>
    <property type="match status" value="2"/>
</dbReference>
<dbReference type="PROSITE" id="PS50013">
    <property type="entry name" value="CHROMO_2"/>
    <property type="match status" value="1"/>
</dbReference>
<dbReference type="PROSITE" id="PS51192">
    <property type="entry name" value="HELICASE_ATP_BIND_1"/>
    <property type="match status" value="1"/>
</dbReference>
<dbReference type="PROSITE" id="PS51194">
    <property type="entry name" value="HELICASE_CTER"/>
    <property type="match status" value="1"/>
</dbReference>
<keyword id="KW-0002">3D-structure</keyword>
<keyword id="KW-0010">Activator</keyword>
<keyword id="KW-0025">Alternative splicing</keyword>
<keyword id="KW-0067">ATP-binding</keyword>
<keyword id="KW-1269">Autism</keyword>
<keyword id="KW-1268">Autism spectrum disorder</keyword>
<keyword id="KW-0156">Chromatin regulator</keyword>
<keyword id="KW-0225">Disease variant</keyword>
<keyword id="KW-0238">DNA-binding</keyword>
<keyword id="KW-0378">Hydrolase</keyword>
<keyword id="KW-1017">Isopeptide bond</keyword>
<keyword id="KW-0547">Nucleotide-binding</keyword>
<keyword id="KW-0539">Nucleus</keyword>
<keyword id="KW-0597">Phosphoprotein</keyword>
<keyword id="KW-1267">Proteomics identification</keyword>
<keyword id="KW-1185">Reference proteome</keyword>
<keyword id="KW-0677">Repeat</keyword>
<keyword id="KW-0678">Repressor</keyword>
<keyword id="KW-0804">Transcription</keyword>
<keyword id="KW-0805">Transcription regulation</keyword>
<keyword id="KW-0832">Ubl conjugation</keyword>
<keyword id="KW-0879">Wnt signaling pathway</keyword>
<proteinExistence type="evidence at protein level"/>
<reference key="1">
    <citation type="journal article" date="2007" name="BMC Genomics">
        <title>The full-ORF clone resource of the German cDNA consortium.</title>
        <authorList>
            <person name="Bechtel S."/>
            <person name="Rosenfelder H."/>
            <person name="Duda A."/>
            <person name="Schmidt C.P."/>
            <person name="Ernst U."/>
            <person name="Wellenreuther R."/>
            <person name="Mehrle A."/>
            <person name="Schuster C."/>
            <person name="Bahr A."/>
            <person name="Bloecker H."/>
            <person name="Heubner D."/>
            <person name="Hoerlein A."/>
            <person name="Michel G."/>
            <person name="Wedler H."/>
            <person name="Koehrer K."/>
            <person name="Ottenwaelder B."/>
            <person name="Poustka A."/>
            <person name="Wiemann S."/>
            <person name="Schupp I."/>
        </authorList>
    </citation>
    <scope>NUCLEOTIDE SEQUENCE [LARGE SCALE MRNA] (ISOFORM 2)</scope>
    <source>
        <tissue>Lymph node</tissue>
        <tissue>Uterine endothelium</tissue>
    </source>
</reference>
<reference key="2">
    <citation type="journal article" date="2003" name="Nature">
        <title>The DNA sequence and analysis of human chromosome 14.</title>
        <authorList>
            <person name="Heilig R."/>
            <person name="Eckenberg R."/>
            <person name="Petit J.-L."/>
            <person name="Fonknechten N."/>
            <person name="Da Silva C."/>
            <person name="Cattolico L."/>
            <person name="Levy M."/>
            <person name="Barbe V."/>
            <person name="De Berardinis V."/>
            <person name="Ureta-Vidal A."/>
            <person name="Pelletier E."/>
            <person name="Vico V."/>
            <person name="Anthouard V."/>
            <person name="Rowen L."/>
            <person name="Madan A."/>
            <person name="Qin S."/>
            <person name="Sun H."/>
            <person name="Du H."/>
            <person name="Pepin K."/>
            <person name="Artiguenave F."/>
            <person name="Robert C."/>
            <person name="Cruaud C."/>
            <person name="Bruels T."/>
            <person name="Jaillon O."/>
            <person name="Friedlander L."/>
            <person name="Samson G."/>
            <person name="Brottier P."/>
            <person name="Cure S."/>
            <person name="Segurens B."/>
            <person name="Aniere F."/>
            <person name="Samain S."/>
            <person name="Crespeau H."/>
            <person name="Abbasi N."/>
            <person name="Aiach N."/>
            <person name="Boscus D."/>
            <person name="Dickhoff R."/>
            <person name="Dors M."/>
            <person name="Dubois I."/>
            <person name="Friedman C."/>
            <person name="Gouyvenoux M."/>
            <person name="James R."/>
            <person name="Madan A."/>
            <person name="Mairey-Estrada B."/>
            <person name="Mangenot S."/>
            <person name="Martins N."/>
            <person name="Menard M."/>
            <person name="Oztas S."/>
            <person name="Ratcliffe A."/>
            <person name="Shaffer T."/>
            <person name="Trask B."/>
            <person name="Vacherie B."/>
            <person name="Bellemere C."/>
            <person name="Belser C."/>
            <person name="Besnard-Gonnet M."/>
            <person name="Bartol-Mavel D."/>
            <person name="Boutard M."/>
            <person name="Briez-Silla S."/>
            <person name="Combette S."/>
            <person name="Dufosse-Laurent V."/>
            <person name="Ferron C."/>
            <person name="Lechaplais C."/>
            <person name="Louesse C."/>
            <person name="Muselet D."/>
            <person name="Magdelenat G."/>
            <person name="Pateau E."/>
            <person name="Petit E."/>
            <person name="Sirvain-Trukniewicz P."/>
            <person name="Trybou A."/>
            <person name="Vega-Czarny N."/>
            <person name="Bataille E."/>
            <person name="Bluet E."/>
            <person name="Bordelais I."/>
            <person name="Dubois M."/>
            <person name="Dumont C."/>
            <person name="Guerin T."/>
            <person name="Haffray S."/>
            <person name="Hammadi R."/>
            <person name="Muanga J."/>
            <person name="Pellouin V."/>
            <person name="Robert D."/>
            <person name="Wunderle E."/>
            <person name="Gauguet G."/>
            <person name="Roy A."/>
            <person name="Sainte-Marthe L."/>
            <person name="Verdier J."/>
            <person name="Verdier-Discala C."/>
            <person name="Hillier L.W."/>
            <person name="Fulton L."/>
            <person name="McPherson J."/>
            <person name="Matsuda F."/>
            <person name="Wilson R."/>
            <person name="Scarpelli C."/>
            <person name="Gyapay G."/>
            <person name="Wincker P."/>
            <person name="Saurin W."/>
            <person name="Quetier F."/>
            <person name="Waterston R."/>
            <person name="Hood L."/>
            <person name="Weissenbach J."/>
        </authorList>
    </citation>
    <scope>NUCLEOTIDE SEQUENCE [LARGE SCALE GENOMIC DNA]</scope>
</reference>
<reference key="3">
    <citation type="submission" date="2003-01" db="EMBL/GenBank/DDBJ databases">
        <authorList>
            <consortium name="The Cancer Genome Anatomy Project (CGAP) at the National Cancer Institute"/>
        </authorList>
    </citation>
    <scope>NUCLEOTIDE SEQUENCE [LARGE SCALE MRNA] OF 28-176 (ISOFORM 1)</scope>
</reference>
<reference key="4">
    <citation type="journal article" date="2000" name="DNA Res.">
        <title>Prediction of the coding sequences of unidentified human genes. XVIII. The complete sequences of 100 new cDNA clones from brain which code for large proteins in vitro.</title>
        <authorList>
            <person name="Nagase T."/>
            <person name="Kikuno R."/>
            <person name="Nakayama M."/>
            <person name="Hirosawa M."/>
            <person name="Ohara O."/>
        </authorList>
    </citation>
    <scope>NUCLEOTIDE SEQUENCE [LARGE SCALE MRNA] OF 150-2581 (ISOFORM 1)</scope>
    <source>
        <tissue>Brain</tissue>
    </source>
</reference>
<reference key="5">
    <citation type="journal article" date="2002" name="DNA Res.">
        <title>Construction of expression-ready cDNA clones for KIAA genes: manual curation of 330 KIAA cDNA clones.</title>
        <authorList>
            <person name="Nakajima D."/>
            <person name="Okazaki N."/>
            <person name="Yamakawa H."/>
            <person name="Kikuno R."/>
            <person name="Ohara O."/>
            <person name="Nagase T."/>
        </authorList>
    </citation>
    <scope>SEQUENCE REVISION</scope>
</reference>
<reference key="6">
    <citation type="submission" date="2003-08" db="EMBL/GenBank/DDBJ databases">
        <authorList>
            <person name="Ohara O."/>
            <person name="Nagase T."/>
            <person name="Kikuno R."/>
        </authorList>
    </citation>
    <scope>SEQUENCE REVISION</scope>
</reference>
<reference key="7">
    <citation type="submission" date="2003-09" db="EMBL/GenBank/DDBJ databases">
        <title>The nucleotide sequence of a long cDNA clone isolated from human spleen.</title>
        <authorList>
            <person name="Jikuya H."/>
            <person name="Takano J."/>
            <person name="Kikuno R."/>
            <person name="Nagase T."/>
            <person name="Ohara O."/>
        </authorList>
    </citation>
    <scope>NUCLEOTIDE SEQUENCE [LARGE SCALE MRNA] OF 1038-2581</scope>
    <source>
        <tissue>Spleen</tissue>
    </source>
</reference>
<reference key="8">
    <citation type="journal article" date="2004" name="Genome Res.">
        <title>The status, quality, and expansion of the NIH full-length cDNA project: the Mammalian Gene Collection (MGC).</title>
        <authorList>
            <consortium name="The MGC Project Team"/>
        </authorList>
    </citation>
    <scope>NUCLEOTIDE SEQUENCE [LARGE SCALE MRNA] OF 1674-2581</scope>
    <source>
        <tissue>Brain</tissue>
        <tissue>Duodenum</tissue>
        <tissue>Liver</tissue>
        <tissue>Lung</tissue>
        <tissue>Spleen</tissue>
    </source>
</reference>
<reference key="9">
    <citation type="journal article" date="2005" name="Cell">
        <title>Physical association and coordinate function of the H3 K4 methyltransferase MLL1 and the H4 K16 acetyltransferase MOF.</title>
        <authorList>
            <person name="Dou Y."/>
            <person name="Milne T.A."/>
            <person name="Tackett A.J."/>
            <person name="Smith E.R."/>
            <person name="Fukuda A."/>
            <person name="Wysocka J."/>
            <person name="Allis C.D."/>
            <person name="Chait B.T."/>
            <person name="Hess J.L."/>
            <person name="Roeder R.G."/>
        </authorList>
    </citation>
    <scope>IDENTIFICATION IN THE MLL1/MLL COMPLEX</scope>
</reference>
<reference key="10">
    <citation type="journal article" date="2006" name="Cell">
        <title>Global, in vivo, and site-specific phosphorylation dynamics in signaling networks.</title>
        <authorList>
            <person name="Olsen J.V."/>
            <person name="Blagoev B."/>
            <person name="Gnad F."/>
            <person name="Macek B."/>
            <person name="Kumar C."/>
            <person name="Mortensen P."/>
            <person name="Mann M."/>
        </authorList>
    </citation>
    <scope>IDENTIFICATION BY MASS SPECTROMETRY [LARGE SCALE ANALYSIS]</scope>
    <source>
        <tissue>Cervix carcinoma</tissue>
    </source>
</reference>
<reference key="11">
    <citation type="journal article" date="2006" name="Mol. Cell">
        <title>CTCF-dependent chromatin insulator is linked to epigenetic remodeling.</title>
        <authorList>
            <person name="Ishihara K."/>
            <person name="Oshimura M."/>
            <person name="Nakao M."/>
        </authorList>
    </citation>
    <scope>INTERACTION WITH CTCF</scope>
</reference>
<reference key="12">
    <citation type="journal article" date="2006" name="Nat. Biotechnol.">
        <title>A probability-based approach for high-throughput protein phosphorylation analysis and site localization.</title>
        <authorList>
            <person name="Beausoleil S.A."/>
            <person name="Villen J."/>
            <person name="Gerber S.A."/>
            <person name="Rush J."/>
            <person name="Gygi S.P."/>
        </authorList>
    </citation>
    <scope>PHOSPHORYLATION [LARGE SCALE ANALYSIS] AT THR-2051</scope>
    <scope>IDENTIFICATION BY MASS SPECTROMETRY [LARGE SCALE ANALYSIS]</scope>
    <source>
        <tissue>Cervix carcinoma</tissue>
    </source>
</reference>
<reference key="13">
    <citation type="journal article" date="2007" name="Mol. Cell. Biol.">
        <title>CHD8 associates with human Staf and contributes to efficient U6 RNA polymerase III transcription.</title>
        <authorList>
            <person name="Yuan C.-C."/>
            <person name="Zhao X."/>
            <person name="Florens L."/>
            <person name="Swanson S.K."/>
            <person name="Washburn M.P."/>
            <person name="Hernandez N."/>
        </authorList>
    </citation>
    <scope>FUNCTION</scope>
    <scope>INTERACTION WITH ZNF143</scope>
</reference>
<reference key="14">
    <citation type="journal article" date="2007" name="J. Med. Genet.">
        <title>Novel deletions of 14q11.2 associated with developmental delay, cognitive impairment and similar minor anomalies in three children.</title>
        <authorList>
            <person name="Zahir F."/>
            <person name="Firth H.V."/>
            <person name="Baross A."/>
            <person name="Delaney A.D."/>
            <person name="Eydoux P."/>
            <person name="Gibson W.T."/>
            <person name="Langlois S."/>
            <person name="Martin H."/>
            <person name="Willatt L."/>
            <person name="Marra M.A."/>
            <person name="Friedman J.M."/>
        </authorList>
    </citation>
    <scope>POSSIBLE ASSOCIATION WITH DEVELOPMENTAL DELAY</scope>
</reference>
<reference key="15">
    <citation type="journal article" date="2008" name="J. Proteome Res.">
        <title>Combining protein-based IMAC, peptide-based IMAC, and MudPIT for efficient phosphoproteomic analysis.</title>
        <authorList>
            <person name="Cantin G.T."/>
            <person name="Yi W."/>
            <person name="Lu B."/>
            <person name="Park S.K."/>
            <person name="Xu T."/>
            <person name="Lee J.-D."/>
            <person name="Yates J.R. III"/>
        </authorList>
    </citation>
    <scope>PHOSPHORYLATION [LARGE SCALE ANALYSIS] AT SER-2182 AND SER-2211</scope>
    <scope>IDENTIFICATION BY MASS SPECTROMETRY [LARGE SCALE ANALYSIS]</scope>
    <source>
        <tissue>Cervix carcinoma</tissue>
    </source>
</reference>
<reference key="16">
    <citation type="journal article" date="2008" name="Mol. Cell. Biol.">
        <title>CHD8 is an ATP-dependent chromatin remodeling factor that regulates beta-catenin target genes.</title>
        <authorList>
            <person name="Thompson B.A."/>
            <person name="Tremblay V."/>
            <person name="Lin G."/>
            <person name="Bochar D.A."/>
        </authorList>
    </citation>
    <scope>FUNCTION AS AN ATPASE</scope>
    <scope>DNA-BINDING</scope>
    <scope>SUBCELLULAR LOCATION</scope>
    <scope>INTERACTION WITH CTNNB1</scope>
    <scope>IDENTIFICATION IN A COMPLEX WITH WDR5</scope>
    <scope>MUTAGENESIS OF LYS-842</scope>
</reference>
<reference key="17">
    <citation type="journal article" date="2008" name="Proc. Natl. Acad. Sci. U.S.A.">
        <title>A quantitative atlas of mitotic phosphorylation.</title>
        <authorList>
            <person name="Dephoure N."/>
            <person name="Zhou C."/>
            <person name="Villen J."/>
            <person name="Beausoleil S.A."/>
            <person name="Bakalarski C.E."/>
            <person name="Elledge S.J."/>
            <person name="Gygi S.P."/>
        </authorList>
    </citation>
    <scope>PHOSPHORYLATION [LARGE SCALE ANALYSIS] AT SER-562; SER-1976; SER-2008; SER-2046 AND SER-2519</scope>
    <scope>IDENTIFICATION BY MASS SPECTROMETRY [LARGE SCALE ANALYSIS]</scope>
    <source>
        <tissue>Cervix carcinoma</tissue>
    </source>
</reference>
<reference key="18">
    <citation type="journal article" date="2009" name="Anal. Chem.">
        <title>Lys-N and trypsin cover complementary parts of the phosphoproteome in a refined SCX-based approach.</title>
        <authorList>
            <person name="Gauci S."/>
            <person name="Helbig A.O."/>
            <person name="Slijper M."/>
            <person name="Krijgsveld J."/>
            <person name="Heck A.J."/>
            <person name="Mohammed S."/>
        </authorList>
    </citation>
    <scope>IDENTIFICATION BY MASS SPECTROMETRY [LARGE SCALE ANALYSIS]</scope>
</reference>
<reference key="19">
    <citation type="journal article" date="2009" name="Sci. Signal.">
        <title>Quantitative phosphoproteomic analysis of T cell receptor signaling reveals system-wide modulation of protein-protein interactions.</title>
        <authorList>
            <person name="Mayya V."/>
            <person name="Lundgren D.H."/>
            <person name="Hwang S.-I."/>
            <person name="Rezaul K."/>
            <person name="Wu L."/>
            <person name="Eng J.K."/>
            <person name="Rodionov V."/>
            <person name="Han D.K."/>
        </authorList>
    </citation>
    <scope>PHOSPHORYLATION [LARGE SCALE ANALYSIS] AT SER-553; SER-1420; SER-1424; THR-1993; SER-2008 AND SER-2200</scope>
    <scope>IDENTIFICATION BY MASS SPECTROMETRY [LARGE SCALE ANALYSIS]</scope>
    <source>
        <tissue>Leukemic T-cell</tissue>
    </source>
</reference>
<reference key="20">
    <citation type="journal article" date="2010" name="Hum. Mol. Genet.">
        <title>CHD8 interacts with CHD7, a protein which is mutated in CHARGE syndrome.</title>
        <authorList>
            <person name="Batsukh T."/>
            <person name="Pieper L."/>
            <person name="Koszucka A.M."/>
            <person name="von Velsen N."/>
            <person name="Hoyer-Fender S."/>
            <person name="Elbracht M."/>
            <person name="Bergman J.E."/>
            <person name="Hoefsloot L.H."/>
            <person name="Pauli S."/>
        </authorList>
    </citation>
    <scope>INTERACTION WITH CHD7</scope>
    <scope>SUBCELLULAR LOCATION</scope>
</reference>
<reference key="21">
    <citation type="journal article" date="2010" name="Sci. Signal.">
        <title>Quantitative phosphoproteomics reveals widespread full phosphorylation site occupancy during mitosis.</title>
        <authorList>
            <person name="Olsen J.V."/>
            <person name="Vermeulen M."/>
            <person name="Santamaria A."/>
            <person name="Kumar C."/>
            <person name="Miller M.L."/>
            <person name="Jensen L.J."/>
            <person name="Gnad F."/>
            <person name="Cox J."/>
            <person name="Jensen T.S."/>
            <person name="Nigg E.A."/>
            <person name="Brunak S."/>
            <person name="Mann M."/>
        </authorList>
    </citation>
    <scope>PHOSPHORYLATION [LARGE SCALE ANALYSIS] AT SER-1420; SER-1424; SER-2008 AND SER-2046</scope>
    <scope>IDENTIFICATION BY MASS SPECTROMETRY [LARGE SCALE ANALYSIS]</scope>
    <source>
        <tissue>Cervix carcinoma</tissue>
    </source>
</reference>
<reference key="22">
    <citation type="journal article" date="2011" name="BMC Syst. Biol.">
        <title>Initial characterization of the human central proteome.</title>
        <authorList>
            <person name="Burkard T.R."/>
            <person name="Planyavsky M."/>
            <person name="Kaupe I."/>
            <person name="Breitwieser F.P."/>
            <person name="Buerckstuemmer T."/>
            <person name="Bennett K.L."/>
            <person name="Superti-Furga G."/>
            <person name="Colinge J."/>
        </authorList>
    </citation>
    <scope>IDENTIFICATION BY MASS SPECTROMETRY [LARGE SCALE ANALYSIS]</scope>
</reference>
<reference key="23">
    <citation type="journal article" date="2011" name="Sci. Signal.">
        <title>System-wide temporal characterization of the proteome and phosphoproteome of human embryonic stem cell differentiation.</title>
        <authorList>
            <person name="Rigbolt K.T."/>
            <person name="Prokhorova T.A."/>
            <person name="Akimov V."/>
            <person name="Henningsen J."/>
            <person name="Johansen P.T."/>
            <person name="Kratchmarova I."/>
            <person name="Kassem M."/>
            <person name="Mann M."/>
            <person name="Olsen J.V."/>
            <person name="Blagoev B."/>
        </authorList>
    </citation>
    <scope>PHOSPHORYLATION [LARGE SCALE ANALYSIS] AT SER-1420; SER-1424; SER-2046; SER-2069 AND SER-2071</scope>
    <scope>IDENTIFICATION BY MASS SPECTROMETRY [LARGE SCALE ANALYSIS]</scope>
</reference>
<reference key="24">
    <citation type="journal article" date="2012" name="PLoS ONE">
        <title>Identification and characterization of FAM124B as a novel component of a CHD7 and CHD8 containing complex.</title>
        <authorList>
            <person name="Batsukh T."/>
            <person name="Schulz Y."/>
            <person name="Wolf S."/>
            <person name="Rabe T.I."/>
            <person name="Oellerich T."/>
            <person name="Urlaub H."/>
            <person name="Schaefer I.M."/>
            <person name="Pauli S."/>
        </authorList>
    </citation>
    <scope>INTERACTION WITH FAM124B</scope>
</reference>
<reference key="25">
    <citation type="journal article" date="2013" name="J. Proteome Res.">
        <title>Toward a comprehensive characterization of a human cancer cell phosphoproteome.</title>
        <authorList>
            <person name="Zhou H."/>
            <person name="Di Palma S."/>
            <person name="Preisinger C."/>
            <person name="Peng M."/>
            <person name="Polat A.N."/>
            <person name="Heck A.J."/>
            <person name="Mohammed S."/>
        </authorList>
    </citation>
    <scope>PHOSPHORYLATION [LARGE SCALE ANALYSIS] AT SER-432; SER-1978; SER-2046 AND SER-2519</scope>
    <scope>IDENTIFICATION BY MASS SPECTROMETRY [LARGE SCALE ANALYSIS]</scope>
    <source>
        <tissue>Cervix carcinoma</tissue>
        <tissue>Erythroleukemia</tissue>
    </source>
</reference>
<reference key="26">
    <citation type="journal article" date="2014" name="Nat. Struct. Mol. Biol.">
        <title>Uncovering global SUMOylation signaling networks in a site-specific manner.</title>
        <authorList>
            <person name="Hendriks I.A."/>
            <person name="D'Souza R.C."/>
            <person name="Yang B."/>
            <person name="Verlaan-de Vries M."/>
            <person name="Mann M."/>
            <person name="Vertegaal A.C."/>
        </authorList>
    </citation>
    <scope>SUMOYLATION [LARGE SCALE ANALYSIS] AT LYS-2256</scope>
    <scope>IDENTIFICATION BY MASS SPECTROMETRY [LARGE SCALE ANALYSIS]</scope>
</reference>
<reference key="27">
    <citation type="journal article" date="2017" name="Nat. Struct. Mol. Biol.">
        <title>Site-specific mapping of the human SUMO proteome reveals co-modification with phosphorylation.</title>
        <authorList>
            <person name="Hendriks I.A."/>
            <person name="Lyon D."/>
            <person name="Young C."/>
            <person name="Jensen L.J."/>
            <person name="Vertegaal A.C."/>
            <person name="Nielsen M.L."/>
        </authorList>
    </citation>
    <scope>SUMOYLATION [LARGE SCALE ANALYSIS] AT LYS-2025</scope>
    <scope>IDENTIFICATION BY MASS SPECTROMETRY [LARGE SCALE ANALYSIS]</scope>
</reference>
<reference key="28">
    <citation type="journal article" date="2017" name="J. Biol. Chem.">
        <title>The ATP-dependent Chromatin Remodeling Enzymes CHD6, CHD7, and CHD8 Exhibit Distinct Nucleosome Binding and Remodeling Activities.</title>
        <authorList>
            <person name="Manning B.J."/>
            <person name="Yusufzai T."/>
        </authorList>
    </citation>
    <scope>FUNCTION AS AN ATPASE</scope>
    <scope>CATALYTIC ACTIVITY</scope>
    <scope>BIOPHYSICOCHEMICAL PROPERTIES</scope>
    <scope>DNA-BINDING</scope>
</reference>
<reference key="29">
    <citation type="journal article" date="2022" name="J. Med. Genet.">
        <title>Functional analysis of TLK2 variants and their proximal interactomes implicates impaired kinase activity and chromatin maintenance defects in their pathogenesis.</title>
        <authorList>
            <person name="Pavinato L."/>
            <person name="Villamor-Paya M."/>
            <person name="Sanchiz-Calvo M."/>
            <person name="Andreoli C."/>
            <person name="Gay M."/>
            <person name="Vilaseca M."/>
            <person name="Arauz-Garofalo G."/>
            <person name="Ciolfi A."/>
            <person name="Bruselles A."/>
            <person name="Pippucci T."/>
            <person name="Prota V."/>
            <person name="Carli D."/>
            <person name="Giorgio E."/>
            <person name="Radio F.C."/>
            <person name="Antona V."/>
            <person name="Giuffre M."/>
            <person name="Ranguin K."/>
            <person name="Colson C."/>
            <person name="De Rubeis S."/>
            <person name="Dimartino P."/>
            <person name="Buxbaum J.D."/>
            <person name="Ferrero G.B."/>
            <person name="Tartaglia M."/>
            <person name="Martinelli S."/>
            <person name="Stracker T.H."/>
            <person name="Brusco A."/>
        </authorList>
    </citation>
    <scope>INTERACTION WITH TLK2</scope>
</reference>
<reference key="30">
    <citation type="journal article" date="2022" name="Nucleic Acids Res.">
        <title>CHD8 suppression impacts on histone H3 lysine 36 trimethylation and alters RNA alternative splicing.</title>
        <authorList>
            <person name="Kerschbamer E."/>
            <person name="Arnoldi M."/>
            <person name="Tripathi T."/>
            <person name="Pellegrini M."/>
            <person name="Maturi S."/>
            <person name="Erdin S."/>
            <person name="Salviato E."/>
            <person name="Di Leva F."/>
            <person name="Sebestyen E."/>
            <person name="Dassi E."/>
            <person name="Zarantonello G."/>
            <person name="Benelli M."/>
            <person name="Campos E."/>
            <person name="Basson M.A."/>
            <person name="Gusella J.F."/>
            <person name="Gustincich S."/>
            <person name="Piazza S."/>
            <person name="Demichelis F."/>
            <person name="Talkowski M.E."/>
            <person name="Ferrari F."/>
            <person name="Biagioli M."/>
        </authorList>
    </citation>
    <scope>FUNCTION</scope>
    <scope>SUBCELLULAR LOCATION</scope>
    <scope>INTERACTION WITH HNRNPL</scope>
</reference>
<reference key="31">
    <citation type="submission" date="2006-10" db="PDB data bank">
        <title>Solution structure of the first BRK domain from human chromodomain-helicase-DNA-binding protein 8.</title>
        <authorList>
            <consortium name="RIKEN structural genomics initiative (RSGI)"/>
        </authorList>
    </citation>
    <scope>STRUCTURE BY NMR OF 2291-2372</scope>
</reference>
<reference key="32">
    <citation type="journal article" date="2012" name="Science">
        <title>Multiplex targeted sequencing identifies recurrently mutated genes in autism spectrum disorders.</title>
        <authorList>
            <person name="O'Roak B.J."/>
            <person name="Vives L."/>
            <person name="Fu W."/>
            <person name="Egertson J.D."/>
            <person name="Stanaway I.B."/>
            <person name="Phelps I.G."/>
            <person name="Carvill G."/>
            <person name="Kumar A."/>
            <person name="Lee C."/>
            <person name="Ankenman K."/>
            <person name="Munson J."/>
            <person name="Hiatt J.B."/>
            <person name="Turner E.H."/>
            <person name="Levy R."/>
            <person name="O'Day D.R."/>
            <person name="Krumm N."/>
            <person name="Coe B.P."/>
            <person name="Martin B.K."/>
            <person name="Borenstein E."/>
            <person name="Nickerson D.A."/>
            <person name="Mefford H.C."/>
            <person name="Doherty D."/>
            <person name="Akey J.M."/>
            <person name="Bernier R."/>
            <person name="Eichler E.E."/>
            <person name="Shendure J."/>
        </authorList>
    </citation>
    <scope>VARIANT IDDAM HIS-2498 DEL</scope>
</reference>
<reference key="33">
    <citation type="journal article" date="2015" name="Neuron">
        <title>Targeted DNA Sequencing from Autism Spectrum Disorder Brains Implicates Multiple Genetic Mechanisms.</title>
        <authorList>
            <person name="D'Gama A.M."/>
            <person name="Pochareddy S."/>
            <person name="Li M."/>
            <person name="Jamuar S.S."/>
            <person name="Reiff R.E."/>
            <person name="Lam A.T."/>
            <person name="Sestan N."/>
            <person name="Walsh C.A."/>
        </authorList>
    </citation>
    <scope>VARIANT IDDAM ILE-744</scope>
</reference>
<protein>
    <recommendedName>
        <fullName evidence="3">Chromodomain-helicase-DNA-binding protein 8</fullName>
        <shortName evidence="3">CHD-8</shortName>
        <ecNumber evidence="3 8 13">3.6.4.-</ecNumber>
    </recommendedName>
    <alternativeName>
        <fullName evidence="3">ATP-dependent helicase CHD8</fullName>
    </alternativeName>
    <alternativeName>
        <fullName>Helicase with SNF2 domain 1</fullName>
    </alternativeName>
</protein>